<protein>
    <recommendedName>
        <fullName evidence="1">Small ribosomal subunit protein uS15</fullName>
    </recommendedName>
    <alternativeName>
        <fullName evidence="2">30S ribosomal protein S15</fullName>
    </alternativeName>
</protein>
<feature type="chain" id="PRO_0000115497" description="Small ribosomal subunit protein uS15">
    <location>
        <begin position="1"/>
        <end position="89"/>
    </location>
</feature>
<name>RS15_PASMU</name>
<comment type="function">
    <text evidence="1">One of the primary rRNA binding proteins, it binds directly to 16S rRNA where it helps nucleate assembly of the platform of the 30S subunit by binding and bridging several RNA helices of the 16S rRNA.</text>
</comment>
<comment type="function">
    <text evidence="1">Forms an intersubunit bridge (bridge B4) with the 23S rRNA of the 50S subunit in the ribosome.</text>
</comment>
<comment type="subunit">
    <text evidence="1">Part of the 30S ribosomal subunit. Forms a bridge to the 50S subunit in the 70S ribosome, contacting the 23S rRNA.</text>
</comment>
<comment type="similarity">
    <text evidence="1">Belongs to the universal ribosomal protein uS15 family.</text>
</comment>
<dbReference type="EMBL" id="AE004439">
    <property type="protein sequence ID" value="AAK02385.1"/>
    <property type="molecule type" value="Genomic_DNA"/>
</dbReference>
<dbReference type="RefSeq" id="WP_005721273.1">
    <property type="nucleotide sequence ID" value="NC_002663.1"/>
</dbReference>
<dbReference type="SMR" id="Q9CNX1"/>
<dbReference type="STRING" id="272843.PM0301"/>
<dbReference type="EnsemblBacteria" id="AAK02385">
    <property type="protein sequence ID" value="AAK02385"/>
    <property type="gene ID" value="PM0301"/>
</dbReference>
<dbReference type="GeneID" id="77206210"/>
<dbReference type="KEGG" id="pmu:PM0301"/>
<dbReference type="HOGENOM" id="CLU_148518_0_0_6"/>
<dbReference type="OrthoDB" id="9799262at2"/>
<dbReference type="Proteomes" id="UP000000809">
    <property type="component" value="Chromosome"/>
</dbReference>
<dbReference type="GO" id="GO:0022627">
    <property type="term" value="C:cytosolic small ribosomal subunit"/>
    <property type="evidence" value="ECO:0007669"/>
    <property type="project" value="TreeGrafter"/>
</dbReference>
<dbReference type="GO" id="GO:0019843">
    <property type="term" value="F:rRNA binding"/>
    <property type="evidence" value="ECO:0007669"/>
    <property type="project" value="UniProtKB-UniRule"/>
</dbReference>
<dbReference type="GO" id="GO:0003735">
    <property type="term" value="F:structural constituent of ribosome"/>
    <property type="evidence" value="ECO:0007669"/>
    <property type="project" value="InterPro"/>
</dbReference>
<dbReference type="GO" id="GO:0006412">
    <property type="term" value="P:translation"/>
    <property type="evidence" value="ECO:0007669"/>
    <property type="project" value="UniProtKB-UniRule"/>
</dbReference>
<dbReference type="CDD" id="cd00353">
    <property type="entry name" value="Ribosomal_S15p_S13e"/>
    <property type="match status" value="1"/>
</dbReference>
<dbReference type="FunFam" id="1.10.287.10:FF:000002">
    <property type="entry name" value="30S ribosomal protein S15"/>
    <property type="match status" value="1"/>
</dbReference>
<dbReference type="Gene3D" id="6.10.250.3130">
    <property type="match status" value="1"/>
</dbReference>
<dbReference type="Gene3D" id="1.10.287.10">
    <property type="entry name" value="S15/NS1, RNA-binding"/>
    <property type="match status" value="1"/>
</dbReference>
<dbReference type="HAMAP" id="MF_01343_B">
    <property type="entry name" value="Ribosomal_uS15_B"/>
    <property type="match status" value="1"/>
</dbReference>
<dbReference type="InterPro" id="IPR000589">
    <property type="entry name" value="Ribosomal_uS15"/>
</dbReference>
<dbReference type="InterPro" id="IPR005290">
    <property type="entry name" value="Ribosomal_uS15_bac-type"/>
</dbReference>
<dbReference type="InterPro" id="IPR009068">
    <property type="entry name" value="uS15_NS1_RNA-bd_sf"/>
</dbReference>
<dbReference type="NCBIfam" id="TIGR00952">
    <property type="entry name" value="S15_bact"/>
    <property type="match status" value="1"/>
</dbReference>
<dbReference type="PANTHER" id="PTHR23321">
    <property type="entry name" value="RIBOSOMAL PROTEIN S15, BACTERIAL AND ORGANELLAR"/>
    <property type="match status" value="1"/>
</dbReference>
<dbReference type="PANTHER" id="PTHR23321:SF26">
    <property type="entry name" value="SMALL RIBOSOMAL SUBUNIT PROTEIN US15M"/>
    <property type="match status" value="1"/>
</dbReference>
<dbReference type="Pfam" id="PF00312">
    <property type="entry name" value="Ribosomal_S15"/>
    <property type="match status" value="1"/>
</dbReference>
<dbReference type="SMART" id="SM01387">
    <property type="entry name" value="Ribosomal_S15"/>
    <property type="match status" value="1"/>
</dbReference>
<dbReference type="SUPFAM" id="SSF47060">
    <property type="entry name" value="S15/NS1 RNA-binding domain"/>
    <property type="match status" value="1"/>
</dbReference>
<dbReference type="PROSITE" id="PS00362">
    <property type="entry name" value="RIBOSOMAL_S15"/>
    <property type="match status" value="1"/>
</dbReference>
<accession>Q9CNX1</accession>
<sequence>MSLSTEKKAAIVAEFGRDAKDTGSSEVQIALLTAQINHLQSHFATHKKDHHGRRGLLRMVSRRRKLLDYLKRTNLELYTSTIARLGLRR</sequence>
<proteinExistence type="inferred from homology"/>
<gene>
    <name evidence="1" type="primary">rpsO</name>
    <name evidence="1" type="synonym">rps15</name>
    <name type="ordered locus">PM0301</name>
</gene>
<reference key="1">
    <citation type="journal article" date="2001" name="Proc. Natl. Acad. Sci. U.S.A.">
        <title>Complete genomic sequence of Pasteurella multocida Pm70.</title>
        <authorList>
            <person name="May B.J."/>
            <person name="Zhang Q."/>
            <person name="Li L.L."/>
            <person name="Paustian M.L."/>
            <person name="Whittam T.S."/>
            <person name="Kapur V."/>
        </authorList>
    </citation>
    <scope>NUCLEOTIDE SEQUENCE [LARGE SCALE GENOMIC DNA]</scope>
    <source>
        <strain>Pm70</strain>
    </source>
</reference>
<evidence type="ECO:0000255" key="1">
    <source>
        <dbReference type="HAMAP-Rule" id="MF_01343"/>
    </source>
</evidence>
<evidence type="ECO:0000305" key="2"/>
<keyword id="KW-1185">Reference proteome</keyword>
<keyword id="KW-0687">Ribonucleoprotein</keyword>
<keyword id="KW-0689">Ribosomal protein</keyword>
<keyword id="KW-0694">RNA-binding</keyword>
<keyword id="KW-0699">rRNA-binding</keyword>
<organism>
    <name type="scientific">Pasteurella multocida (strain Pm70)</name>
    <dbReference type="NCBI Taxonomy" id="272843"/>
    <lineage>
        <taxon>Bacteria</taxon>
        <taxon>Pseudomonadati</taxon>
        <taxon>Pseudomonadota</taxon>
        <taxon>Gammaproteobacteria</taxon>
        <taxon>Pasteurellales</taxon>
        <taxon>Pasteurellaceae</taxon>
        <taxon>Pasteurella</taxon>
    </lineage>
</organism>